<protein>
    <recommendedName>
        <fullName evidence="1">Ribosomal protein L11 methyltransferase</fullName>
        <shortName evidence="1">L11 Mtase</shortName>
        <ecNumber evidence="1">2.1.1.-</ecNumber>
    </recommendedName>
</protein>
<name>PRMA_HERA2</name>
<comment type="function">
    <text evidence="1">Methylates ribosomal protein L11.</text>
</comment>
<comment type="catalytic activity">
    <reaction evidence="1">
        <text>L-lysyl-[protein] + 3 S-adenosyl-L-methionine = N(6),N(6),N(6)-trimethyl-L-lysyl-[protein] + 3 S-adenosyl-L-homocysteine + 3 H(+)</text>
        <dbReference type="Rhea" id="RHEA:54192"/>
        <dbReference type="Rhea" id="RHEA-COMP:9752"/>
        <dbReference type="Rhea" id="RHEA-COMP:13826"/>
        <dbReference type="ChEBI" id="CHEBI:15378"/>
        <dbReference type="ChEBI" id="CHEBI:29969"/>
        <dbReference type="ChEBI" id="CHEBI:57856"/>
        <dbReference type="ChEBI" id="CHEBI:59789"/>
        <dbReference type="ChEBI" id="CHEBI:61961"/>
    </reaction>
</comment>
<comment type="subcellular location">
    <subcellularLocation>
        <location evidence="1">Cytoplasm</location>
    </subcellularLocation>
</comment>
<comment type="similarity">
    <text evidence="1">Belongs to the methyltransferase superfamily. PrmA family.</text>
</comment>
<organism>
    <name type="scientific">Herpetosiphon aurantiacus (strain ATCC 23779 / DSM 785 / 114-95)</name>
    <dbReference type="NCBI Taxonomy" id="316274"/>
    <lineage>
        <taxon>Bacteria</taxon>
        <taxon>Bacillati</taxon>
        <taxon>Chloroflexota</taxon>
        <taxon>Chloroflexia</taxon>
        <taxon>Herpetosiphonales</taxon>
        <taxon>Herpetosiphonaceae</taxon>
        <taxon>Herpetosiphon</taxon>
    </lineage>
</organism>
<dbReference type="EC" id="2.1.1.-" evidence="1"/>
<dbReference type="EMBL" id="CP000875">
    <property type="protein sequence ID" value="ABX05747.1"/>
    <property type="molecule type" value="Genomic_DNA"/>
</dbReference>
<dbReference type="SMR" id="A9B5V4"/>
<dbReference type="FunCoup" id="A9B5V4">
    <property type="interactions" value="306"/>
</dbReference>
<dbReference type="STRING" id="316274.Haur_3109"/>
<dbReference type="KEGG" id="hau:Haur_3109"/>
<dbReference type="eggNOG" id="COG2264">
    <property type="taxonomic scope" value="Bacteria"/>
</dbReference>
<dbReference type="HOGENOM" id="CLU_049382_0_1_0"/>
<dbReference type="InParanoid" id="A9B5V4"/>
<dbReference type="Proteomes" id="UP000000787">
    <property type="component" value="Chromosome"/>
</dbReference>
<dbReference type="GO" id="GO:0005737">
    <property type="term" value="C:cytoplasm"/>
    <property type="evidence" value="ECO:0007669"/>
    <property type="project" value="UniProtKB-SubCell"/>
</dbReference>
<dbReference type="GO" id="GO:0016279">
    <property type="term" value="F:protein-lysine N-methyltransferase activity"/>
    <property type="evidence" value="ECO:0007669"/>
    <property type="project" value="RHEA"/>
</dbReference>
<dbReference type="GO" id="GO:0032259">
    <property type="term" value="P:methylation"/>
    <property type="evidence" value="ECO:0007669"/>
    <property type="project" value="UniProtKB-KW"/>
</dbReference>
<dbReference type="CDD" id="cd02440">
    <property type="entry name" value="AdoMet_MTases"/>
    <property type="match status" value="1"/>
</dbReference>
<dbReference type="Gene3D" id="3.40.50.150">
    <property type="entry name" value="Vaccinia Virus protein VP39"/>
    <property type="match status" value="1"/>
</dbReference>
<dbReference type="HAMAP" id="MF_00735">
    <property type="entry name" value="Methyltr_PrmA"/>
    <property type="match status" value="1"/>
</dbReference>
<dbReference type="InterPro" id="IPR050078">
    <property type="entry name" value="Ribosomal_L11_MeTrfase_PrmA"/>
</dbReference>
<dbReference type="InterPro" id="IPR004498">
    <property type="entry name" value="Ribosomal_PrmA_MeTrfase"/>
</dbReference>
<dbReference type="InterPro" id="IPR029063">
    <property type="entry name" value="SAM-dependent_MTases_sf"/>
</dbReference>
<dbReference type="PANTHER" id="PTHR43648">
    <property type="entry name" value="ELECTRON TRANSFER FLAVOPROTEIN BETA SUBUNIT LYSINE METHYLTRANSFERASE"/>
    <property type="match status" value="1"/>
</dbReference>
<dbReference type="PANTHER" id="PTHR43648:SF1">
    <property type="entry name" value="ELECTRON TRANSFER FLAVOPROTEIN BETA SUBUNIT LYSINE METHYLTRANSFERASE"/>
    <property type="match status" value="1"/>
</dbReference>
<dbReference type="Pfam" id="PF06325">
    <property type="entry name" value="PrmA"/>
    <property type="match status" value="1"/>
</dbReference>
<dbReference type="PIRSF" id="PIRSF000401">
    <property type="entry name" value="RPL11_MTase"/>
    <property type="match status" value="1"/>
</dbReference>
<dbReference type="SUPFAM" id="SSF53335">
    <property type="entry name" value="S-adenosyl-L-methionine-dependent methyltransferases"/>
    <property type="match status" value="1"/>
</dbReference>
<accession>A9B5V4</accession>
<sequence length="321" mass="35192">MQWLELSVTVDTEAVESVSELFAQYGYNGGVAVEEAIIPSLDSPEYQIDTNKPVIVRTYLLANEQAADAQTQIERGLWVLGMMRPVGDLQVKTIAEEDWANAWKEHYRTRRIGQRFVIVPSWLEYEPAENDVVLNLDPGMAFGTGLHPTTQLCLELMELIEFNNTTVLDLGCGSGILAVGAAKLGSQRVLALDTDPIAVEATAENARINHAETLVTALEGSLGDAPLEHWLGWEGAQLGTPQSYRHHNEFDVILANILAKVHVVLGNDYLAALKPGGVLITSGIINEREADVVAAFDAVGLEQVERRTQGDWVAFTHRKPV</sequence>
<keyword id="KW-0963">Cytoplasm</keyword>
<keyword id="KW-0489">Methyltransferase</keyword>
<keyword id="KW-0949">S-adenosyl-L-methionine</keyword>
<keyword id="KW-0808">Transferase</keyword>
<evidence type="ECO:0000255" key="1">
    <source>
        <dbReference type="HAMAP-Rule" id="MF_00735"/>
    </source>
</evidence>
<feature type="chain" id="PRO_1000132802" description="Ribosomal protein L11 methyltransferase">
    <location>
        <begin position="1"/>
        <end position="321"/>
    </location>
</feature>
<feature type="binding site" evidence="1">
    <location>
        <position position="150"/>
    </location>
    <ligand>
        <name>S-adenosyl-L-methionine</name>
        <dbReference type="ChEBI" id="CHEBI:59789"/>
    </ligand>
</feature>
<feature type="binding site" evidence="1">
    <location>
        <position position="171"/>
    </location>
    <ligand>
        <name>S-adenosyl-L-methionine</name>
        <dbReference type="ChEBI" id="CHEBI:59789"/>
    </ligand>
</feature>
<feature type="binding site" evidence="1">
    <location>
        <position position="193"/>
    </location>
    <ligand>
        <name>S-adenosyl-L-methionine</name>
        <dbReference type="ChEBI" id="CHEBI:59789"/>
    </ligand>
</feature>
<feature type="binding site" evidence="1">
    <location>
        <position position="256"/>
    </location>
    <ligand>
        <name>S-adenosyl-L-methionine</name>
        <dbReference type="ChEBI" id="CHEBI:59789"/>
    </ligand>
</feature>
<gene>
    <name evidence="1" type="primary">prmA</name>
    <name type="ordered locus">Haur_3109</name>
</gene>
<reference key="1">
    <citation type="journal article" date="2011" name="Stand. Genomic Sci.">
        <title>Complete genome sequence of the filamentous gliding predatory bacterium Herpetosiphon aurantiacus type strain (114-95(T)).</title>
        <authorList>
            <person name="Kiss H."/>
            <person name="Nett M."/>
            <person name="Domin N."/>
            <person name="Martin K."/>
            <person name="Maresca J.A."/>
            <person name="Copeland A."/>
            <person name="Lapidus A."/>
            <person name="Lucas S."/>
            <person name="Berry K.W."/>
            <person name="Glavina Del Rio T."/>
            <person name="Dalin E."/>
            <person name="Tice H."/>
            <person name="Pitluck S."/>
            <person name="Richardson P."/>
            <person name="Bruce D."/>
            <person name="Goodwin L."/>
            <person name="Han C."/>
            <person name="Detter J.C."/>
            <person name="Schmutz J."/>
            <person name="Brettin T."/>
            <person name="Land M."/>
            <person name="Hauser L."/>
            <person name="Kyrpides N.C."/>
            <person name="Ivanova N."/>
            <person name="Goeker M."/>
            <person name="Woyke T."/>
            <person name="Klenk H.P."/>
            <person name="Bryant D.A."/>
        </authorList>
    </citation>
    <scope>NUCLEOTIDE SEQUENCE [LARGE SCALE GENOMIC DNA]</scope>
    <source>
        <strain>ATCC 23779 / DSM 785 / 114-95</strain>
    </source>
</reference>
<proteinExistence type="inferred from homology"/>